<sequence length="132" mass="14438">MAKPKKKVTRIRRRERKNIERGHAHIQSTFNNTIITLTDVHGNAISWASSGQLGFKGSRKSTPFASQMAAETAAKAAMEHGLKSVEVFVKGPGSGREAAIRALQATGLEVTMIKDVTPIPHNGCRPPKRRRV</sequence>
<accession>Q18CI7</accession>
<name>RS11_CLOD6</name>
<comment type="function">
    <text evidence="1">Located on the platform of the 30S subunit, it bridges several disparate RNA helices of the 16S rRNA. Forms part of the Shine-Dalgarno cleft in the 70S ribosome.</text>
</comment>
<comment type="subunit">
    <text evidence="1">Part of the 30S ribosomal subunit. Interacts with proteins S7 and S18. Binds to IF-3.</text>
</comment>
<comment type="similarity">
    <text evidence="1">Belongs to the universal ribosomal protein uS11 family.</text>
</comment>
<keyword id="KW-1185">Reference proteome</keyword>
<keyword id="KW-0687">Ribonucleoprotein</keyword>
<keyword id="KW-0689">Ribosomal protein</keyword>
<keyword id="KW-0694">RNA-binding</keyword>
<keyword id="KW-0699">rRNA-binding</keyword>
<gene>
    <name evidence="1" type="primary">rpsK</name>
    <name type="ordered locus">CD630_00960</name>
</gene>
<feature type="chain" id="PRO_0000294738" description="Small ribosomal subunit protein uS11">
    <location>
        <begin position="1"/>
        <end position="132"/>
    </location>
</feature>
<reference key="1">
    <citation type="journal article" date="2006" name="Nat. Genet.">
        <title>The multidrug-resistant human pathogen Clostridium difficile has a highly mobile, mosaic genome.</title>
        <authorList>
            <person name="Sebaihia M."/>
            <person name="Wren B.W."/>
            <person name="Mullany P."/>
            <person name="Fairweather N.F."/>
            <person name="Minton N."/>
            <person name="Stabler R."/>
            <person name="Thomson N.R."/>
            <person name="Roberts A.P."/>
            <person name="Cerdeno-Tarraga A.M."/>
            <person name="Wang H."/>
            <person name="Holden M.T.G."/>
            <person name="Wright A."/>
            <person name="Churcher C."/>
            <person name="Quail M.A."/>
            <person name="Baker S."/>
            <person name="Bason N."/>
            <person name="Brooks K."/>
            <person name="Chillingworth T."/>
            <person name="Cronin A."/>
            <person name="Davis P."/>
            <person name="Dowd L."/>
            <person name="Fraser A."/>
            <person name="Feltwell T."/>
            <person name="Hance Z."/>
            <person name="Holroyd S."/>
            <person name="Jagels K."/>
            <person name="Moule S."/>
            <person name="Mungall K."/>
            <person name="Price C."/>
            <person name="Rabbinowitsch E."/>
            <person name="Sharp S."/>
            <person name="Simmonds M."/>
            <person name="Stevens K."/>
            <person name="Unwin L."/>
            <person name="Whithead S."/>
            <person name="Dupuy B."/>
            <person name="Dougan G."/>
            <person name="Barrell B."/>
            <person name="Parkhill J."/>
        </authorList>
    </citation>
    <scope>NUCLEOTIDE SEQUENCE [LARGE SCALE GENOMIC DNA]</scope>
    <source>
        <strain>630</strain>
    </source>
</reference>
<dbReference type="EMBL" id="AM180355">
    <property type="protein sequence ID" value="CAJ66915.1"/>
    <property type="molecule type" value="Genomic_DNA"/>
</dbReference>
<dbReference type="RefSeq" id="WP_003421122.1">
    <property type="nucleotide sequence ID" value="NZ_JAUPES010000043.1"/>
</dbReference>
<dbReference type="RefSeq" id="YP_001086564.1">
    <property type="nucleotide sequence ID" value="NC_009089.1"/>
</dbReference>
<dbReference type="SMR" id="Q18CI7"/>
<dbReference type="STRING" id="272563.CD630_00960"/>
<dbReference type="EnsemblBacteria" id="CAJ66915">
    <property type="protein sequence ID" value="CAJ66915"/>
    <property type="gene ID" value="CD630_00960"/>
</dbReference>
<dbReference type="GeneID" id="66352598"/>
<dbReference type="KEGG" id="cdf:CD630_00960"/>
<dbReference type="KEGG" id="pdc:CDIF630_00166"/>
<dbReference type="PATRIC" id="fig|272563.120.peg.106"/>
<dbReference type="eggNOG" id="COG0100">
    <property type="taxonomic scope" value="Bacteria"/>
</dbReference>
<dbReference type="OrthoDB" id="9806415at2"/>
<dbReference type="PhylomeDB" id="Q18CI7"/>
<dbReference type="BioCyc" id="PDIF272563:G12WB-154-MONOMER"/>
<dbReference type="Proteomes" id="UP000001978">
    <property type="component" value="Chromosome"/>
</dbReference>
<dbReference type="GO" id="GO:1990904">
    <property type="term" value="C:ribonucleoprotein complex"/>
    <property type="evidence" value="ECO:0007669"/>
    <property type="project" value="UniProtKB-KW"/>
</dbReference>
<dbReference type="GO" id="GO:0005840">
    <property type="term" value="C:ribosome"/>
    <property type="evidence" value="ECO:0007669"/>
    <property type="project" value="UniProtKB-KW"/>
</dbReference>
<dbReference type="GO" id="GO:0019843">
    <property type="term" value="F:rRNA binding"/>
    <property type="evidence" value="ECO:0007669"/>
    <property type="project" value="UniProtKB-UniRule"/>
</dbReference>
<dbReference type="GO" id="GO:0003735">
    <property type="term" value="F:structural constituent of ribosome"/>
    <property type="evidence" value="ECO:0007669"/>
    <property type="project" value="InterPro"/>
</dbReference>
<dbReference type="GO" id="GO:0006412">
    <property type="term" value="P:translation"/>
    <property type="evidence" value="ECO:0007669"/>
    <property type="project" value="UniProtKB-UniRule"/>
</dbReference>
<dbReference type="FunFam" id="3.30.420.80:FF:000001">
    <property type="entry name" value="30S ribosomal protein S11"/>
    <property type="match status" value="1"/>
</dbReference>
<dbReference type="Gene3D" id="3.30.420.80">
    <property type="entry name" value="Ribosomal protein S11"/>
    <property type="match status" value="1"/>
</dbReference>
<dbReference type="HAMAP" id="MF_01310">
    <property type="entry name" value="Ribosomal_uS11"/>
    <property type="match status" value="1"/>
</dbReference>
<dbReference type="InterPro" id="IPR001971">
    <property type="entry name" value="Ribosomal_uS11"/>
</dbReference>
<dbReference type="InterPro" id="IPR019981">
    <property type="entry name" value="Ribosomal_uS11_bac-type"/>
</dbReference>
<dbReference type="InterPro" id="IPR018102">
    <property type="entry name" value="Ribosomal_uS11_CS"/>
</dbReference>
<dbReference type="InterPro" id="IPR036967">
    <property type="entry name" value="Ribosomal_uS11_sf"/>
</dbReference>
<dbReference type="NCBIfam" id="NF003698">
    <property type="entry name" value="PRK05309.1"/>
    <property type="match status" value="1"/>
</dbReference>
<dbReference type="NCBIfam" id="TIGR03632">
    <property type="entry name" value="uS11_bact"/>
    <property type="match status" value="1"/>
</dbReference>
<dbReference type="PANTHER" id="PTHR11759">
    <property type="entry name" value="40S RIBOSOMAL PROTEIN S14/30S RIBOSOMAL PROTEIN S11"/>
    <property type="match status" value="1"/>
</dbReference>
<dbReference type="Pfam" id="PF00411">
    <property type="entry name" value="Ribosomal_S11"/>
    <property type="match status" value="1"/>
</dbReference>
<dbReference type="PIRSF" id="PIRSF002131">
    <property type="entry name" value="Ribosomal_S11"/>
    <property type="match status" value="1"/>
</dbReference>
<dbReference type="SUPFAM" id="SSF53137">
    <property type="entry name" value="Translational machinery components"/>
    <property type="match status" value="1"/>
</dbReference>
<dbReference type="PROSITE" id="PS00054">
    <property type="entry name" value="RIBOSOMAL_S11"/>
    <property type="match status" value="1"/>
</dbReference>
<protein>
    <recommendedName>
        <fullName evidence="1">Small ribosomal subunit protein uS11</fullName>
    </recommendedName>
    <alternativeName>
        <fullName evidence="2">30S ribosomal protein S11</fullName>
    </alternativeName>
</protein>
<organism>
    <name type="scientific">Clostridioides difficile (strain 630)</name>
    <name type="common">Peptoclostridium difficile</name>
    <dbReference type="NCBI Taxonomy" id="272563"/>
    <lineage>
        <taxon>Bacteria</taxon>
        <taxon>Bacillati</taxon>
        <taxon>Bacillota</taxon>
        <taxon>Clostridia</taxon>
        <taxon>Peptostreptococcales</taxon>
        <taxon>Peptostreptococcaceae</taxon>
        <taxon>Clostridioides</taxon>
    </lineage>
</organism>
<evidence type="ECO:0000255" key="1">
    <source>
        <dbReference type="HAMAP-Rule" id="MF_01310"/>
    </source>
</evidence>
<evidence type="ECO:0000305" key="2"/>
<proteinExistence type="inferred from homology"/>